<accession>P28349</accession>
<accession>Q7RVG9</accession>
<protein>
    <recommendedName>
        <fullName>Nitrogen assimilation transcription factor nit-4</fullName>
    </recommendedName>
</protein>
<organism>
    <name type="scientific">Neurospora crassa (strain ATCC 24698 / 74-OR23-1A / CBS 708.71 / DSM 1257 / FGSC 987)</name>
    <dbReference type="NCBI Taxonomy" id="367110"/>
    <lineage>
        <taxon>Eukaryota</taxon>
        <taxon>Fungi</taxon>
        <taxon>Dikarya</taxon>
        <taxon>Ascomycota</taxon>
        <taxon>Pezizomycotina</taxon>
        <taxon>Sordariomycetes</taxon>
        <taxon>Sordariomycetidae</taxon>
        <taxon>Sordariales</taxon>
        <taxon>Sordariaceae</taxon>
        <taxon>Neurospora</taxon>
    </lineage>
</organism>
<proteinExistence type="predicted"/>
<keyword id="KW-0010">Activator</keyword>
<keyword id="KW-0238">DNA-binding</keyword>
<keyword id="KW-0479">Metal-binding</keyword>
<keyword id="KW-0534">Nitrate assimilation</keyword>
<keyword id="KW-0539">Nucleus</keyword>
<keyword id="KW-1185">Reference proteome</keyword>
<keyword id="KW-0804">Transcription</keyword>
<keyword id="KW-0805">Transcription regulation</keyword>
<keyword id="KW-0862">Zinc</keyword>
<gene>
    <name type="primary">nit-4</name>
    <name type="ORF">NCU08294</name>
</gene>
<evidence type="ECO:0000255" key="1">
    <source>
        <dbReference type="PROSITE-ProRule" id="PRU00227"/>
    </source>
</evidence>
<evidence type="ECO:0000256" key="2">
    <source>
        <dbReference type="SAM" id="MobiDB-lite"/>
    </source>
</evidence>
<evidence type="ECO:0000305" key="3"/>
<reference key="1">
    <citation type="journal article" date="1991" name="Mol. Cell. Biol.">
        <title>nit-4, a pathway-specific regulatory gene of Neurospora crassa, encodes a protein with a putative binuclear zinc DNA-binding domain.</title>
        <authorList>
            <person name="Yuan G.-F."/>
            <person name="Fu Y.-H."/>
            <person name="Marzluf G.A."/>
        </authorList>
    </citation>
    <scope>NUCLEOTIDE SEQUENCE [GENOMIC DNA]</scope>
</reference>
<reference key="2">
    <citation type="journal article" date="1992" name="Mol. Microbiol.">
        <title>Molecular characterization of mutations of nit-4, the pathway-specific regulatory gene which controls nitrate assimilation in Neurospora crassa.</title>
        <authorList>
            <person name="Yuan G.-F."/>
            <person name="Marzluf G.A."/>
        </authorList>
    </citation>
    <scope>NUCLEOTIDE SEQUENCE [GENOMIC DNA]</scope>
</reference>
<reference key="3">
    <citation type="journal article" date="2003" name="Nature">
        <title>The genome sequence of the filamentous fungus Neurospora crassa.</title>
        <authorList>
            <person name="Galagan J.E."/>
            <person name="Calvo S.E."/>
            <person name="Borkovich K.A."/>
            <person name="Selker E.U."/>
            <person name="Read N.D."/>
            <person name="Jaffe D.B."/>
            <person name="FitzHugh W."/>
            <person name="Ma L.-J."/>
            <person name="Smirnov S."/>
            <person name="Purcell S."/>
            <person name="Rehman B."/>
            <person name="Elkins T."/>
            <person name="Engels R."/>
            <person name="Wang S."/>
            <person name="Nielsen C.B."/>
            <person name="Butler J."/>
            <person name="Endrizzi M."/>
            <person name="Qui D."/>
            <person name="Ianakiev P."/>
            <person name="Bell-Pedersen D."/>
            <person name="Nelson M.A."/>
            <person name="Werner-Washburne M."/>
            <person name="Selitrennikoff C.P."/>
            <person name="Kinsey J.A."/>
            <person name="Braun E.L."/>
            <person name="Zelter A."/>
            <person name="Schulte U."/>
            <person name="Kothe G.O."/>
            <person name="Jedd G."/>
            <person name="Mewes H.-W."/>
            <person name="Staben C."/>
            <person name="Marcotte E."/>
            <person name="Greenberg D."/>
            <person name="Roy A."/>
            <person name="Foley K."/>
            <person name="Naylor J."/>
            <person name="Stange-Thomann N."/>
            <person name="Barrett R."/>
            <person name="Gnerre S."/>
            <person name="Kamal M."/>
            <person name="Kamvysselis M."/>
            <person name="Mauceli E.W."/>
            <person name="Bielke C."/>
            <person name="Rudd S."/>
            <person name="Frishman D."/>
            <person name="Krystofova S."/>
            <person name="Rasmussen C."/>
            <person name="Metzenberg R.L."/>
            <person name="Perkins D.D."/>
            <person name="Kroken S."/>
            <person name="Cogoni C."/>
            <person name="Macino G."/>
            <person name="Catcheside D.E.A."/>
            <person name="Li W."/>
            <person name="Pratt R.J."/>
            <person name="Osmani S.A."/>
            <person name="DeSouza C.P.C."/>
            <person name="Glass N.L."/>
            <person name="Orbach M.J."/>
            <person name="Berglund J.A."/>
            <person name="Voelker R."/>
            <person name="Yarden O."/>
            <person name="Plamann M."/>
            <person name="Seiler S."/>
            <person name="Dunlap J.C."/>
            <person name="Radford A."/>
            <person name="Aramayo R."/>
            <person name="Natvig D.O."/>
            <person name="Alex L.A."/>
            <person name="Mannhaupt G."/>
            <person name="Ebbole D.J."/>
            <person name="Freitag M."/>
            <person name="Paulsen I."/>
            <person name="Sachs M.S."/>
            <person name="Lander E.S."/>
            <person name="Nusbaum C."/>
            <person name="Birren B.W."/>
        </authorList>
    </citation>
    <scope>NUCLEOTIDE SEQUENCE [LARGE SCALE GENOMIC DNA]</scope>
    <source>
        <strain>ATCC 24698 / 74-OR23-1A / CBS 708.71 / DSM 1257 / FGSC 987</strain>
    </source>
</reference>
<sequence>MNSSDVQMMSSQDAPGSAGLAPDNIASSLPSKKKSRRGADPTNQKRRCVSTACIACRRRKSKCDGALPSCAACASVYGTECIYDPNSDHRRKGVYREKNDSMKAQNATLQILIEAILNASEEDVIDIVRRIRTCDDLDEVAESIRRDEKNATATNDNDDSDEPTQPGRDDATSQAVEGERDLARKMGELRIENGSVRFIGGTSHLIYLSEPTDASEEPELETRLSTCDENPITTWTEVTKNPQLIIHLVNMYFNWHYPYFTTLSRSLFYRDFIKGKPAGQPRSTVYCSSLLVNAMLALGCHFTSVDGAFAVPGDSRTKGDHFFAEAKRLIVQNDEYEKPRLTTVQALALMSVREAGCGREAKGWVYSGMSFRMAQDIGLNLDIGSLDEKEVDARRITFWGCFVFDKCWSNYLGRLPQLPKNTYNVPKYDVFPDEDAELWSPYTDAGFDQSCKQPSRTRAIGLQLSKLCEISSDLLLFFYHPSHIGRSSGKSAELKKLSELHRRLEDWRTELPKEFEPKDGQLPNVILMHMFYHLQYIHLFRPFLKYTKEASPLEKVQPRRICTTNANSISKLMRLYKKLYNLRQICNIAVYMLHSACTIHMLNLPEKTARRDITHGVRQLEEMAEDWPCARRTLGIISVLARKWNVELPEEAAIVLKRTDEKYGMFSTSEVPSPNRTAPSLAPSSPAPPYTPEASLLFSTTAAAVLEQQPYSPMTLYSHPTPPHLGPESISDPGMSPNIVTFSDLPDPSAPIIPQQQQNMQAISSLSQNNMLHQHHHHLQNQHQPQQPHHNHMTYQQQQHNLLTHPVSASSMSMSDTLATITAWGIPTSSPGNNNNNNIVSQHPHHQKQPQQQQQPQAQRYPTVGSVGTNTVKPPAAATQTFTPAQLHANNLATATRSTASNHKSVGRHVSPSSIYAIDGQDWYLKDGVTWQQGFQGWDLEGGGAGTATSTGGIGDGGGPTGGAGDSMARLAPRGNIGGGGGGGGGSTGQRQQQQQRQQQQQQQQQQQQQQQQQQQQQQQQQQQEANMFAYHHGAERGGGGIESTGMGMTTVGGGGGGFDPIGGSGLLDDLVGLDELGSLDGLGHLPGLD</sequence>
<comment type="function">
    <text>Pathway-specific regulatory gene of nitrate assimilation; it activates the transcription of the genes for nitrate and nitrite reductases.</text>
</comment>
<comment type="subcellular location">
    <subcellularLocation>
        <location>Nucleus</location>
    </subcellularLocation>
</comment>
<comment type="domain">
    <text>The glutamine-rich domain might function in activating gene expression.</text>
</comment>
<dbReference type="EMBL" id="M80368">
    <property type="protein sequence ID" value="AAA33602.1"/>
    <property type="molecule type" value="Genomic_DNA"/>
</dbReference>
<dbReference type="EMBL" id="CM002239">
    <property type="protein sequence ID" value="EAA33271.3"/>
    <property type="molecule type" value="Genomic_DNA"/>
</dbReference>
<dbReference type="PIR" id="A41696">
    <property type="entry name" value="A41696"/>
</dbReference>
<dbReference type="RefSeq" id="XP_962507.3">
    <property type="nucleotide sequence ID" value="XM_957414.3"/>
</dbReference>
<dbReference type="FunCoup" id="P28349">
    <property type="interactions" value="191"/>
</dbReference>
<dbReference type="STRING" id="367110.P28349"/>
<dbReference type="PaxDb" id="5141-EFNCRP00000008391"/>
<dbReference type="EnsemblFungi" id="EAA33271">
    <property type="protein sequence ID" value="EAA33271"/>
    <property type="gene ID" value="NCU08294"/>
</dbReference>
<dbReference type="GeneID" id="3878673"/>
<dbReference type="KEGG" id="ncr:NCU08294"/>
<dbReference type="VEuPathDB" id="FungiDB:NCU08294"/>
<dbReference type="HOGENOM" id="CLU_007003_6_0_1"/>
<dbReference type="InParanoid" id="P28349"/>
<dbReference type="OrthoDB" id="2162761at2759"/>
<dbReference type="Proteomes" id="UP000001805">
    <property type="component" value="Chromosome 4, Linkage Group IV"/>
</dbReference>
<dbReference type="GO" id="GO:0005634">
    <property type="term" value="C:nucleus"/>
    <property type="evidence" value="ECO:0007669"/>
    <property type="project" value="UniProtKB-SubCell"/>
</dbReference>
<dbReference type="GO" id="GO:0003677">
    <property type="term" value="F:DNA binding"/>
    <property type="evidence" value="ECO:0007669"/>
    <property type="project" value="UniProtKB-KW"/>
</dbReference>
<dbReference type="GO" id="GO:0000981">
    <property type="term" value="F:DNA-binding transcription factor activity, RNA polymerase II-specific"/>
    <property type="evidence" value="ECO:0007669"/>
    <property type="project" value="InterPro"/>
</dbReference>
<dbReference type="GO" id="GO:0008270">
    <property type="term" value="F:zinc ion binding"/>
    <property type="evidence" value="ECO:0007669"/>
    <property type="project" value="InterPro"/>
</dbReference>
<dbReference type="GO" id="GO:0006351">
    <property type="term" value="P:DNA-templated transcription"/>
    <property type="evidence" value="ECO:0007669"/>
    <property type="project" value="InterPro"/>
</dbReference>
<dbReference type="GO" id="GO:0042128">
    <property type="term" value="P:nitrate assimilation"/>
    <property type="evidence" value="ECO:0007669"/>
    <property type="project" value="UniProtKB-KW"/>
</dbReference>
<dbReference type="CDD" id="cd12148">
    <property type="entry name" value="fungal_TF_MHR"/>
    <property type="match status" value="1"/>
</dbReference>
<dbReference type="CDD" id="cd00067">
    <property type="entry name" value="GAL4"/>
    <property type="match status" value="1"/>
</dbReference>
<dbReference type="Gene3D" id="4.10.240.10">
    <property type="entry name" value="Zn(2)-C6 fungal-type DNA-binding domain"/>
    <property type="match status" value="1"/>
</dbReference>
<dbReference type="InterPro" id="IPR051615">
    <property type="entry name" value="Transcr_Regulatory_Elem"/>
</dbReference>
<dbReference type="InterPro" id="IPR007219">
    <property type="entry name" value="Transcription_factor_dom_fun"/>
</dbReference>
<dbReference type="InterPro" id="IPR036864">
    <property type="entry name" value="Zn2-C6_fun-type_DNA-bd_sf"/>
</dbReference>
<dbReference type="InterPro" id="IPR001138">
    <property type="entry name" value="Zn2Cys6_DnaBD"/>
</dbReference>
<dbReference type="PANTHER" id="PTHR31313">
    <property type="entry name" value="TY1 ENHANCER ACTIVATOR"/>
    <property type="match status" value="1"/>
</dbReference>
<dbReference type="PANTHER" id="PTHR31313:SF81">
    <property type="entry name" value="TY1 ENHANCER ACTIVATOR"/>
    <property type="match status" value="1"/>
</dbReference>
<dbReference type="Pfam" id="PF04082">
    <property type="entry name" value="Fungal_trans"/>
    <property type="match status" value="1"/>
</dbReference>
<dbReference type="Pfam" id="PF00172">
    <property type="entry name" value="Zn_clus"/>
    <property type="match status" value="1"/>
</dbReference>
<dbReference type="SMART" id="SM00906">
    <property type="entry name" value="Fungal_trans"/>
    <property type="match status" value="1"/>
</dbReference>
<dbReference type="SMART" id="SM00066">
    <property type="entry name" value="GAL4"/>
    <property type="match status" value="1"/>
</dbReference>
<dbReference type="SUPFAM" id="SSF57701">
    <property type="entry name" value="Zn2/Cys6 DNA-binding domain"/>
    <property type="match status" value="1"/>
</dbReference>
<dbReference type="PROSITE" id="PS00463">
    <property type="entry name" value="ZN2_CY6_FUNGAL_1"/>
    <property type="match status" value="1"/>
</dbReference>
<dbReference type="PROSITE" id="PS50048">
    <property type="entry name" value="ZN2_CY6_FUNGAL_2"/>
    <property type="match status" value="1"/>
</dbReference>
<name>NIT4_NEUCR</name>
<feature type="chain" id="PRO_0000114960" description="Nitrogen assimilation transcription factor nit-4">
    <location>
        <begin position="1"/>
        <end position="1090"/>
    </location>
</feature>
<feature type="DNA-binding region" description="Zn(2)-C6 fungal-type" evidence="1">
    <location>
        <begin position="53"/>
        <end position="81"/>
    </location>
</feature>
<feature type="region of interest" description="Disordered" evidence="2">
    <location>
        <begin position="1"/>
        <end position="43"/>
    </location>
</feature>
<feature type="region of interest" description="Disordered" evidence="2">
    <location>
        <begin position="145"/>
        <end position="176"/>
    </location>
</feature>
<feature type="region of interest" description="Disordered" evidence="2">
    <location>
        <begin position="666"/>
        <end position="689"/>
    </location>
</feature>
<feature type="region of interest" description="Disordered" evidence="2">
    <location>
        <begin position="773"/>
        <end position="798"/>
    </location>
</feature>
<feature type="region of interest" description="Disordered" evidence="2">
    <location>
        <begin position="825"/>
        <end position="875"/>
    </location>
</feature>
<feature type="region of interest" description="Disordered" evidence="2">
    <location>
        <begin position="936"/>
        <end position="999"/>
    </location>
</feature>
<feature type="region of interest" description="Disordered" evidence="2">
    <location>
        <begin position="1033"/>
        <end position="1053"/>
    </location>
</feature>
<feature type="compositionally biased region" description="Polar residues" evidence="2">
    <location>
        <begin position="1"/>
        <end position="14"/>
    </location>
</feature>
<feature type="compositionally biased region" description="Basic and acidic residues" evidence="2">
    <location>
        <begin position="167"/>
        <end position="176"/>
    </location>
</feature>
<feature type="compositionally biased region" description="Polar residues" evidence="2">
    <location>
        <begin position="666"/>
        <end position="677"/>
    </location>
</feature>
<feature type="compositionally biased region" description="Low complexity" evidence="2">
    <location>
        <begin position="849"/>
        <end position="859"/>
    </location>
</feature>
<feature type="compositionally biased region" description="Gly residues" evidence="2">
    <location>
        <begin position="940"/>
        <end position="965"/>
    </location>
</feature>
<feature type="compositionally biased region" description="Gly residues" evidence="2">
    <location>
        <begin position="976"/>
        <end position="988"/>
    </location>
</feature>
<feature type="compositionally biased region" description="Low complexity" evidence="2">
    <location>
        <begin position="990"/>
        <end position="999"/>
    </location>
</feature>
<feature type="sequence conflict" description="In Ref. 1; AAA33602." evidence="3" ref="1">
    <original>K</original>
    <variation>KP</variation>
    <location>
        <position position="98"/>
    </location>
</feature>
<feature type="sequence conflict" description="In Ref. 1; AAA33602 and 2." evidence="3" ref="1 2">
    <original>KP</original>
    <variation>NA</variation>
    <location>
        <begin position="276"/>
        <end position="277"/>
    </location>
</feature>
<feature type="sequence conflict" description="In Ref. 1; AAA33602." evidence="3" ref="1">
    <original>L</original>
    <variation>S</variation>
    <location>
        <position position="467"/>
    </location>
</feature>